<reference key="1">
    <citation type="journal article" date="2001" name="Proc. Natl. Acad. Sci. U.S.A.">
        <title>The complete genome of the crenarchaeon Sulfolobus solfataricus P2.</title>
        <authorList>
            <person name="She Q."/>
            <person name="Singh R.K."/>
            <person name="Confalonieri F."/>
            <person name="Zivanovic Y."/>
            <person name="Allard G."/>
            <person name="Awayez M.J."/>
            <person name="Chan-Weiher C.C.-Y."/>
            <person name="Clausen I.G."/>
            <person name="Curtis B.A."/>
            <person name="De Moors A."/>
            <person name="Erauso G."/>
            <person name="Fletcher C."/>
            <person name="Gordon P.M.K."/>
            <person name="Heikamp-de Jong I."/>
            <person name="Jeffries A.C."/>
            <person name="Kozera C.J."/>
            <person name="Medina N."/>
            <person name="Peng X."/>
            <person name="Thi-Ngoc H.P."/>
            <person name="Redder P."/>
            <person name="Schenk M.E."/>
            <person name="Theriault C."/>
            <person name="Tolstrup N."/>
            <person name="Charlebois R.L."/>
            <person name="Doolittle W.F."/>
            <person name="Duguet M."/>
            <person name="Gaasterland T."/>
            <person name="Garrett R.A."/>
            <person name="Ragan M.A."/>
            <person name="Sensen C.W."/>
            <person name="Van der Oost J."/>
        </authorList>
    </citation>
    <scope>NUCLEOTIDE SEQUENCE [LARGE SCALE GENOMIC DNA]</scope>
    <source>
        <strain>ATCC 35092 / DSM 1617 / JCM 11322 / P2</strain>
    </source>
</reference>
<comment type="function">
    <text evidence="1">Catalyzes the attachment of valine to tRNA(Val). As ValRS can inadvertently accommodate and process structurally similar amino acids such as threonine, to avoid such errors, it has a 'posttransfer' editing activity that hydrolyzes mischarged Thr-tRNA(Val) in a tRNA-dependent manner.</text>
</comment>
<comment type="catalytic activity">
    <reaction evidence="1">
        <text>tRNA(Val) + L-valine + ATP = L-valyl-tRNA(Val) + AMP + diphosphate</text>
        <dbReference type="Rhea" id="RHEA:10704"/>
        <dbReference type="Rhea" id="RHEA-COMP:9672"/>
        <dbReference type="Rhea" id="RHEA-COMP:9708"/>
        <dbReference type="ChEBI" id="CHEBI:30616"/>
        <dbReference type="ChEBI" id="CHEBI:33019"/>
        <dbReference type="ChEBI" id="CHEBI:57762"/>
        <dbReference type="ChEBI" id="CHEBI:78442"/>
        <dbReference type="ChEBI" id="CHEBI:78537"/>
        <dbReference type="ChEBI" id="CHEBI:456215"/>
        <dbReference type="EC" id="6.1.1.9"/>
    </reaction>
</comment>
<comment type="subcellular location">
    <subcellularLocation>
        <location evidence="1">Cytoplasm</location>
    </subcellularLocation>
</comment>
<comment type="domain">
    <text evidence="1">ValRS has two distinct active sites: one for aminoacylation and one for editing. The misactivated threonine is translocated from the active site to the editing site.</text>
</comment>
<comment type="similarity">
    <text evidence="1">Belongs to the class-I aminoacyl-tRNA synthetase family. ValS type 2 subfamily.</text>
</comment>
<organism>
    <name type="scientific">Saccharolobus solfataricus (strain ATCC 35092 / DSM 1617 / JCM 11322 / P2)</name>
    <name type="common">Sulfolobus solfataricus</name>
    <dbReference type="NCBI Taxonomy" id="273057"/>
    <lineage>
        <taxon>Archaea</taxon>
        <taxon>Thermoproteota</taxon>
        <taxon>Thermoprotei</taxon>
        <taxon>Sulfolobales</taxon>
        <taxon>Sulfolobaceae</taxon>
        <taxon>Saccharolobus</taxon>
    </lineage>
</organism>
<gene>
    <name evidence="1" type="primary">valS</name>
    <name type="ordered locus">SSO0899</name>
</gene>
<name>SYV_SACS2</name>
<proteinExistence type="inferred from homology"/>
<accession>Q97ZK9</accession>
<keyword id="KW-0030">Aminoacyl-tRNA synthetase</keyword>
<keyword id="KW-0067">ATP-binding</keyword>
<keyword id="KW-0963">Cytoplasm</keyword>
<keyword id="KW-0436">Ligase</keyword>
<keyword id="KW-0547">Nucleotide-binding</keyword>
<keyword id="KW-0648">Protein biosynthesis</keyword>
<keyword id="KW-1185">Reference proteome</keyword>
<dbReference type="EC" id="6.1.1.9" evidence="1"/>
<dbReference type="EMBL" id="AE006641">
    <property type="protein sequence ID" value="AAK41179.1"/>
    <property type="molecule type" value="Genomic_DNA"/>
</dbReference>
<dbReference type="PIR" id="D90240">
    <property type="entry name" value="D90240"/>
</dbReference>
<dbReference type="RefSeq" id="WP_009992319.1">
    <property type="nucleotide sequence ID" value="NC_002754.1"/>
</dbReference>
<dbReference type="SMR" id="Q97ZK9"/>
<dbReference type="FunCoup" id="Q97ZK9">
    <property type="interactions" value="196"/>
</dbReference>
<dbReference type="STRING" id="273057.SSO0899"/>
<dbReference type="PaxDb" id="273057-SSO0899"/>
<dbReference type="EnsemblBacteria" id="AAK41179">
    <property type="protein sequence ID" value="AAK41179"/>
    <property type="gene ID" value="SSO0899"/>
</dbReference>
<dbReference type="KEGG" id="sso:SSO0899"/>
<dbReference type="PATRIC" id="fig|273057.12.peg.900"/>
<dbReference type="eggNOG" id="arCOG00808">
    <property type="taxonomic scope" value="Archaea"/>
</dbReference>
<dbReference type="HOGENOM" id="CLU_001493_0_2_2"/>
<dbReference type="InParanoid" id="Q97ZK9"/>
<dbReference type="PhylomeDB" id="Q97ZK9"/>
<dbReference type="Proteomes" id="UP000001974">
    <property type="component" value="Chromosome"/>
</dbReference>
<dbReference type="GO" id="GO:0005829">
    <property type="term" value="C:cytosol"/>
    <property type="evidence" value="ECO:0000318"/>
    <property type="project" value="GO_Central"/>
</dbReference>
<dbReference type="GO" id="GO:0002161">
    <property type="term" value="F:aminoacyl-tRNA deacylase activity"/>
    <property type="evidence" value="ECO:0007669"/>
    <property type="project" value="InterPro"/>
</dbReference>
<dbReference type="GO" id="GO:0005524">
    <property type="term" value="F:ATP binding"/>
    <property type="evidence" value="ECO:0007669"/>
    <property type="project" value="UniProtKB-UniRule"/>
</dbReference>
<dbReference type="GO" id="GO:0004832">
    <property type="term" value="F:valine-tRNA ligase activity"/>
    <property type="evidence" value="ECO:0000318"/>
    <property type="project" value="GO_Central"/>
</dbReference>
<dbReference type="GO" id="GO:0006438">
    <property type="term" value="P:valyl-tRNA aminoacylation"/>
    <property type="evidence" value="ECO:0000318"/>
    <property type="project" value="GO_Central"/>
</dbReference>
<dbReference type="CDD" id="cd07962">
    <property type="entry name" value="Anticodon_Ia_Val"/>
    <property type="match status" value="1"/>
</dbReference>
<dbReference type="CDD" id="cd00817">
    <property type="entry name" value="ValRS_core"/>
    <property type="match status" value="1"/>
</dbReference>
<dbReference type="FunFam" id="1.10.730.10:FF:000033">
    <property type="entry name" value="Valine--tRNA ligase"/>
    <property type="match status" value="1"/>
</dbReference>
<dbReference type="FunFam" id="3.40.50.620:FF:000192">
    <property type="entry name" value="Valine--tRNA ligase"/>
    <property type="match status" value="1"/>
</dbReference>
<dbReference type="FunFam" id="3.40.50.620:FF:000324">
    <property type="entry name" value="Valine--tRNA ligase"/>
    <property type="match status" value="1"/>
</dbReference>
<dbReference type="Gene3D" id="3.40.50.620">
    <property type="entry name" value="HUPs"/>
    <property type="match status" value="2"/>
</dbReference>
<dbReference type="Gene3D" id="1.10.730.10">
    <property type="entry name" value="Isoleucyl-tRNA Synthetase, Domain 1"/>
    <property type="match status" value="1"/>
</dbReference>
<dbReference type="HAMAP" id="MF_02005">
    <property type="entry name" value="Val_tRNA_synth_type2"/>
    <property type="match status" value="1"/>
</dbReference>
<dbReference type="InterPro" id="IPR001412">
    <property type="entry name" value="aa-tRNA-synth_I_CS"/>
</dbReference>
<dbReference type="InterPro" id="IPR002300">
    <property type="entry name" value="aa-tRNA-synth_Ia"/>
</dbReference>
<dbReference type="InterPro" id="IPR033705">
    <property type="entry name" value="Anticodon_Ia_Val"/>
</dbReference>
<dbReference type="InterPro" id="IPR013155">
    <property type="entry name" value="M/V/L/I-tRNA-synth_anticd-bd"/>
</dbReference>
<dbReference type="InterPro" id="IPR014729">
    <property type="entry name" value="Rossmann-like_a/b/a_fold"/>
</dbReference>
<dbReference type="InterPro" id="IPR009080">
    <property type="entry name" value="tRNAsynth_Ia_anticodon-bd"/>
</dbReference>
<dbReference type="InterPro" id="IPR009008">
    <property type="entry name" value="Val/Leu/Ile-tRNA-synth_edit"/>
</dbReference>
<dbReference type="InterPro" id="IPR022874">
    <property type="entry name" value="Valine-tRNA_ligase_type_2"/>
</dbReference>
<dbReference type="InterPro" id="IPR002303">
    <property type="entry name" value="Valyl-tRNA_ligase"/>
</dbReference>
<dbReference type="NCBIfam" id="NF009687">
    <property type="entry name" value="PRK13208.1"/>
    <property type="match status" value="1"/>
</dbReference>
<dbReference type="NCBIfam" id="TIGR00422">
    <property type="entry name" value="valS"/>
    <property type="match status" value="1"/>
</dbReference>
<dbReference type="PANTHER" id="PTHR11946:SF93">
    <property type="entry name" value="VALINE--TRNA LIGASE, CHLOROPLASTIC_MITOCHONDRIAL 2"/>
    <property type="match status" value="1"/>
</dbReference>
<dbReference type="PANTHER" id="PTHR11946">
    <property type="entry name" value="VALYL-TRNA SYNTHETASES"/>
    <property type="match status" value="1"/>
</dbReference>
<dbReference type="Pfam" id="PF08264">
    <property type="entry name" value="Anticodon_1"/>
    <property type="match status" value="1"/>
</dbReference>
<dbReference type="Pfam" id="PF00133">
    <property type="entry name" value="tRNA-synt_1"/>
    <property type="match status" value="1"/>
</dbReference>
<dbReference type="PRINTS" id="PR00986">
    <property type="entry name" value="TRNASYNTHVAL"/>
</dbReference>
<dbReference type="SUPFAM" id="SSF47323">
    <property type="entry name" value="Anticodon-binding domain of a subclass of class I aminoacyl-tRNA synthetases"/>
    <property type="match status" value="1"/>
</dbReference>
<dbReference type="SUPFAM" id="SSF52374">
    <property type="entry name" value="Nucleotidylyl transferase"/>
    <property type="match status" value="1"/>
</dbReference>
<dbReference type="SUPFAM" id="SSF50677">
    <property type="entry name" value="ValRS/IleRS/LeuRS editing domain"/>
    <property type="match status" value="1"/>
</dbReference>
<dbReference type="PROSITE" id="PS00178">
    <property type="entry name" value="AA_TRNA_LIGASE_I"/>
    <property type="match status" value="1"/>
</dbReference>
<evidence type="ECO:0000255" key="1">
    <source>
        <dbReference type="HAMAP-Rule" id="MF_02005"/>
    </source>
</evidence>
<protein>
    <recommendedName>
        <fullName evidence="1">Valine--tRNA ligase</fullName>
        <ecNumber evidence="1">6.1.1.9</ecNumber>
    </recommendedName>
    <alternativeName>
        <fullName evidence="1">Valyl-tRNA synthetase</fullName>
        <shortName evidence="1">ValRS</shortName>
    </alternativeName>
</protein>
<sequence length="842" mass="98578">MLFSLRNFISYSNLYLYKNVCIGGQLLLNQDEILKKMEEWPKHYNPKEIEEKWQKIWLSEEYWRDVFRFRDEDDKAPRFVIDTPPPFTSGELHMGHAYWVTIADTIGRFKRLEGYNVLLPQGWDTQGLPTELKVQYKLGIPKDNRQLFLQKCIEWTEEMIKKMKEAMIRLGYRPEWERFEYKTYEPKYRKIIQKSLIDMYKMNLIEMREGPVIWCPKCETALAQSEVGYLEKEGILAYIKFPLKEGGEIVIATTRPELLAATQAIAVNPMDERYKNLVGKIALVPIFNIEVKIISDADVEKEFGTGAVMISTYGDPQDIKWQLKYNLPIKVIVDEKGRIINTNGILDGLKIEQARNKMIELLKTKGYLVKVEKIKHNVLSHVERSDCLSPVEFLVKKQIYIKVLDKKQKLLEEYKKMKFKPARMSYYLEDWIKSIEWDWNITRQRIYGTPLPFWYCENGHLVPAKEEDLPIDPIKTSPPLEKCPLCGSELKPVTDVADVWIDSSVTVLYLTKFYEDKNVFNRTFPASLRLQGTDIIRTWLFYTFFRTLMLANNVPFTTVLVNGQVLGPDGTRMSKSKGNVVSPLDRVNDFGADAIRMALLDASIGDDFPFKWDIVKGKKMLLQKLWNASRLVYPFIAKQRLDKPKSLHIVDKWILQEHKKFVTKAINAYENYDFYLVLQELYNYFWEIVADEYLEMIKHRLFDDDNSAKYTIQRIIRDIIILLHPIAPHITEEIYSRLFGHKKSVLLEELPKVDDIEENKRIDELGEVIKKTNSLIRSEKIKNRLSMNTPVSVKLYASKQVIELINEVKDDVMKTLKVTNLELIESNEEKVEIKTANQSMGV</sequence>
<feature type="chain" id="PRO_0000224635" description="Valine--tRNA ligase">
    <location>
        <begin position="1"/>
        <end position="842"/>
    </location>
</feature>
<feature type="short sequence motif" description="'HIGH' region">
    <location>
        <begin position="86"/>
        <end position="96"/>
    </location>
</feature>
<feature type="short sequence motif" description="'KMSKS' region">
    <location>
        <begin position="572"/>
        <end position="576"/>
    </location>
</feature>
<feature type="binding site" evidence="1">
    <location>
        <position position="575"/>
    </location>
    <ligand>
        <name>ATP</name>
        <dbReference type="ChEBI" id="CHEBI:30616"/>
    </ligand>
</feature>